<proteinExistence type="inferred from homology"/>
<comment type="function">
    <text evidence="1">This protein is located at the 30S-50S ribosomal subunit interface and may play a role in the structure and function of the aminoacyl-tRNA binding site.</text>
</comment>
<comment type="similarity">
    <text evidence="1">Belongs to the bacterial ribosomal protein bL19 family.</text>
</comment>
<dbReference type="EMBL" id="CP000033">
    <property type="protein sequence ID" value="AAV43116.1"/>
    <property type="molecule type" value="Genomic_DNA"/>
</dbReference>
<dbReference type="RefSeq" id="WP_003629071.1">
    <property type="nucleotide sequence ID" value="NC_006814.3"/>
</dbReference>
<dbReference type="RefSeq" id="YP_194147.1">
    <property type="nucleotide sequence ID" value="NC_006814.3"/>
</dbReference>
<dbReference type="SMR" id="Q5FJK8"/>
<dbReference type="STRING" id="272621.LBA1286"/>
<dbReference type="GeneID" id="93289627"/>
<dbReference type="KEGG" id="lac:LBA1286"/>
<dbReference type="PATRIC" id="fig|272621.13.peg.1218"/>
<dbReference type="eggNOG" id="COG0335">
    <property type="taxonomic scope" value="Bacteria"/>
</dbReference>
<dbReference type="HOGENOM" id="CLU_103507_2_1_9"/>
<dbReference type="OrthoDB" id="9803541at2"/>
<dbReference type="BioCyc" id="LACI272621:G1G49-1266-MONOMER"/>
<dbReference type="PRO" id="PR:Q5FJK8"/>
<dbReference type="Proteomes" id="UP000006381">
    <property type="component" value="Chromosome"/>
</dbReference>
<dbReference type="GO" id="GO:0022625">
    <property type="term" value="C:cytosolic large ribosomal subunit"/>
    <property type="evidence" value="ECO:0007669"/>
    <property type="project" value="TreeGrafter"/>
</dbReference>
<dbReference type="GO" id="GO:0003735">
    <property type="term" value="F:structural constituent of ribosome"/>
    <property type="evidence" value="ECO:0007669"/>
    <property type="project" value="InterPro"/>
</dbReference>
<dbReference type="GO" id="GO:0006412">
    <property type="term" value="P:translation"/>
    <property type="evidence" value="ECO:0007669"/>
    <property type="project" value="UniProtKB-UniRule"/>
</dbReference>
<dbReference type="FunFam" id="2.30.30.790:FF:000001">
    <property type="entry name" value="50S ribosomal protein L19"/>
    <property type="match status" value="1"/>
</dbReference>
<dbReference type="Gene3D" id="2.30.30.790">
    <property type="match status" value="1"/>
</dbReference>
<dbReference type="HAMAP" id="MF_00402">
    <property type="entry name" value="Ribosomal_bL19"/>
    <property type="match status" value="1"/>
</dbReference>
<dbReference type="InterPro" id="IPR001857">
    <property type="entry name" value="Ribosomal_bL19"/>
</dbReference>
<dbReference type="InterPro" id="IPR018257">
    <property type="entry name" value="Ribosomal_bL19_CS"/>
</dbReference>
<dbReference type="InterPro" id="IPR038657">
    <property type="entry name" value="Ribosomal_bL19_sf"/>
</dbReference>
<dbReference type="InterPro" id="IPR008991">
    <property type="entry name" value="Translation_prot_SH3-like_sf"/>
</dbReference>
<dbReference type="NCBIfam" id="TIGR01024">
    <property type="entry name" value="rplS_bact"/>
    <property type="match status" value="1"/>
</dbReference>
<dbReference type="PANTHER" id="PTHR15680:SF9">
    <property type="entry name" value="LARGE RIBOSOMAL SUBUNIT PROTEIN BL19M"/>
    <property type="match status" value="1"/>
</dbReference>
<dbReference type="PANTHER" id="PTHR15680">
    <property type="entry name" value="RIBOSOMAL PROTEIN L19"/>
    <property type="match status" value="1"/>
</dbReference>
<dbReference type="Pfam" id="PF01245">
    <property type="entry name" value="Ribosomal_L19"/>
    <property type="match status" value="1"/>
</dbReference>
<dbReference type="PIRSF" id="PIRSF002191">
    <property type="entry name" value="Ribosomal_L19"/>
    <property type="match status" value="1"/>
</dbReference>
<dbReference type="PRINTS" id="PR00061">
    <property type="entry name" value="RIBOSOMALL19"/>
</dbReference>
<dbReference type="SUPFAM" id="SSF50104">
    <property type="entry name" value="Translation proteins SH3-like domain"/>
    <property type="match status" value="1"/>
</dbReference>
<dbReference type="PROSITE" id="PS01015">
    <property type="entry name" value="RIBOSOMAL_L19"/>
    <property type="match status" value="1"/>
</dbReference>
<name>RL19_LACAC</name>
<organism>
    <name type="scientific">Lactobacillus acidophilus (strain ATCC 700396 / NCK56 / N2 / NCFM)</name>
    <dbReference type="NCBI Taxonomy" id="272621"/>
    <lineage>
        <taxon>Bacteria</taxon>
        <taxon>Bacillati</taxon>
        <taxon>Bacillota</taxon>
        <taxon>Bacilli</taxon>
        <taxon>Lactobacillales</taxon>
        <taxon>Lactobacillaceae</taxon>
        <taxon>Lactobacillus</taxon>
    </lineage>
</organism>
<gene>
    <name evidence="1" type="primary">rplS</name>
    <name type="ordered locus">LBA1286</name>
</gene>
<sequence length="115" mass="13057">MDPLIQELTKEQIRDDIPAFRAGDTVTVHVRVVEGTHERIQLFEGVVIKKKGTGIGATYTVRKIASGVGVERTFPVNDPRVAKVEVKRHGRVRRAKLYYLRERHGKSARIAEARR</sequence>
<protein>
    <recommendedName>
        <fullName evidence="1">Large ribosomal subunit protein bL19</fullName>
    </recommendedName>
    <alternativeName>
        <fullName evidence="2">50S ribosomal protein L19</fullName>
    </alternativeName>
</protein>
<reference key="1">
    <citation type="journal article" date="2005" name="Proc. Natl. Acad. Sci. U.S.A.">
        <title>Complete genome sequence of the probiotic lactic acid bacterium Lactobacillus acidophilus NCFM.</title>
        <authorList>
            <person name="Altermann E."/>
            <person name="Russell W.M."/>
            <person name="Azcarate-Peril M.A."/>
            <person name="Barrangou R."/>
            <person name="Buck B.L."/>
            <person name="McAuliffe O."/>
            <person name="Souther N."/>
            <person name="Dobson A."/>
            <person name="Duong T."/>
            <person name="Callanan M."/>
            <person name="Lick S."/>
            <person name="Hamrick A."/>
            <person name="Cano R."/>
            <person name="Klaenhammer T.R."/>
        </authorList>
    </citation>
    <scope>NUCLEOTIDE SEQUENCE [LARGE SCALE GENOMIC DNA]</scope>
    <source>
        <strain>ATCC 700396 / NCK56 / N2 / NCFM</strain>
    </source>
</reference>
<evidence type="ECO:0000255" key="1">
    <source>
        <dbReference type="HAMAP-Rule" id="MF_00402"/>
    </source>
</evidence>
<evidence type="ECO:0000305" key="2"/>
<keyword id="KW-1185">Reference proteome</keyword>
<keyword id="KW-0687">Ribonucleoprotein</keyword>
<keyword id="KW-0689">Ribosomal protein</keyword>
<feature type="chain" id="PRO_0000226851" description="Large ribosomal subunit protein bL19">
    <location>
        <begin position="1"/>
        <end position="115"/>
    </location>
</feature>
<accession>Q5FJK8</accession>